<dbReference type="EMBL" id="CR848038">
    <property type="protein sequence ID" value="CAH64383.1"/>
    <property type="molecule type" value="Genomic_DNA"/>
</dbReference>
<dbReference type="RefSeq" id="WP_011097442.1">
    <property type="nucleotide sequence ID" value="NC_004552.2"/>
</dbReference>
<dbReference type="SMR" id="Q5L4R3"/>
<dbReference type="KEGG" id="cab:CAB944"/>
<dbReference type="eggNOG" id="COG0823">
    <property type="taxonomic scope" value="Bacteria"/>
</dbReference>
<dbReference type="HOGENOM" id="CLU_635688_0_0_0"/>
<dbReference type="OrthoDB" id="108903at2"/>
<dbReference type="Proteomes" id="UP000001012">
    <property type="component" value="Chromosome"/>
</dbReference>
<dbReference type="GO" id="GO:0042597">
    <property type="term" value="C:periplasmic space"/>
    <property type="evidence" value="ECO:0007669"/>
    <property type="project" value="UniProtKB-SubCell"/>
</dbReference>
<dbReference type="Gene3D" id="2.120.10.30">
    <property type="entry name" value="TolB, C-terminal domain"/>
    <property type="match status" value="1"/>
</dbReference>
<dbReference type="InterPro" id="IPR011042">
    <property type="entry name" value="6-blade_b-propeller_TolB-like"/>
</dbReference>
<dbReference type="InterPro" id="IPR011659">
    <property type="entry name" value="PD40"/>
</dbReference>
<dbReference type="NCBIfam" id="NF002183">
    <property type="entry name" value="PRK01029.1"/>
    <property type="match status" value="1"/>
</dbReference>
<dbReference type="PANTHER" id="PTHR36842:SF1">
    <property type="entry name" value="PROTEIN TOLB"/>
    <property type="match status" value="1"/>
</dbReference>
<dbReference type="PANTHER" id="PTHR36842">
    <property type="entry name" value="PROTEIN TOLB HOMOLOG"/>
    <property type="match status" value="1"/>
</dbReference>
<dbReference type="Pfam" id="PF07676">
    <property type="entry name" value="PD40"/>
    <property type="match status" value="3"/>
</dbReference>
<dbReference type="SUPFAM" id="SSF69304">
    <property type="entry name" value="Tricorn protease N-terminal domain"/>
    <property type="match status" value="1"/>
</dbReference>
<proteinExistence type="inferred from homology"/>
<name>TOLB_CHLAB</name>
<sequence length="427" mass="47512">MLRRMLVSAFLMFGIISLYAKELEVSVRSEISRLPIHVELKIGSNDASQQKYLRSLCTTFINDLALGDRLQPSLVQTGSSSAPFNIAMVSHYPEITFTLARGTQNHQPVHSLMLTEDNALNRQKIHEAADKIHYALTSVPGISSGKIIFSLSKNSQDCELKQGELWSVDYDGGNLRPLTQENSLSITPSWMHIGSKKPYLYVSYKFGIPKIFLGSLENTTGKKILHLQGNQFMPAFSPRKKLLAFISDAYGNPDLFLQSFSLSQGAMGKPRRILNETFGTQGNPSFSPDGSKLVFVSNKDGRPRLYILQIDPEMLSPRLLTKKYRNSSCPSWSPDGKKIAFCSVIKGVRQICVYDLATGKDYQLTTTPVDKEGPSWAVDSQHLVYSAGNTGESELYLLSLITQKTKKIVIGLGEKRFPSWGGFPDNQ</sequence>
<accession>Q5L4R3</accession>
<feature type="signal peptide" evidence="2">
    <location>
        <begin position="1"/>
        <end position="20"/>
    </location>
</feature>
<feature type="chain" id="PRO_0000259040" description="Protein TolB homolog" evidence="2">
    <location>
        <begin position="21"/>
        <end position="427"/>
    </location>
</feature>
<organism>
    <name type="scientific">Chlamydia abortus (strain DSM 27085 / S26/3)</name>
    <name type="common">Chlamydophila abortus</name>
    <dbReference type="NCBI Taxonomy" id="218497"/>
    <lineage>
        <taxon>Bacteria</taxon>
        <taxon>Pseudomonadati</taxon>
        <taxon>Chlamydiota</taxon>
        <taxon>Chlamydiia</taxon>
        <taxon>Chlamydiales</taxon>
        <taxon>Chlamydiaceae</taxon>
        <taxon>Chlamydia/Chlamydophila group</taxon>
        <taxon>Chlamydia</taxon>
    </lineage>
</organism>
<reference key="1">
    <citation type="journal article" date="2005" name="Genome Res.">
        <title>The Chlamydophila abortus genome sequence reveals an array of variable proteins that contribute to interspecies variation.</title>
        <authorList>
            <person name="Thomson N.R."/>
            <person name="Yeats C."/>
            <person name="Bell K."/>
            <person name="Holden M.T.G."/>
            <person name="Bentley S.D."/>
            <person name="Livingstone M."/>
            <person name="Cerdeno-Tarraga A.-M."/>
            <person name="Harris B."/>
            <person name="Doggett J."/>
            <person name="Ormond D."/>
            <person name="Mungall K."/>
            <person name="Clarke K."/>
            <person name="Feltwell T."/>
            <person name="Hance Z."/>
            <person name="Sanders M."/>
            <person name="Quail M.A."/>
            <person name="Price C."/>
            <person name="Barrell B.G."/>
            <person name="Parkhill J."/>
            <person name="Longbottom D."/>
        </authorList>
    </citation>
    <scope>NUCLEOTIDE SEQUENCE [LARGE SCALE GENOMIC DNA]</scope>
    <source>
        <strain>DSM 27085 / S26/3</strain>
    </source>
</reference>
<protein>
    <recommendedName>
        <fullName evidence="3">Protein TolB homolog</fullName>
    </recommendedName>
</protein>
<keyword id="KW-0574">Periplasm</keyword>
<keyword id="KW-0732">Signal</keyword>
<gene>
    <name type="primary">tolB</name>
    <name type="ordered locus">CAB944</name>
</gene>
<evidence type="ECO:0000250" key="1">
    <source>
        <dbReference type="UniProtKB" id="P0A855"/>
    </source>
</evidence>
<evidence type="ECO:0000255" key="2"/>
<evidence type="ECO:0000305" key="3"/>
<comment type="subcellular location">
    <subcellularLocation>
        <location evidence="1">Periplasm</location>
    </subcellularLocation>
</comment>
<comment type="similarity">
    <text evidence="3">Belongs to the TolB family.</text>
</comment>